<reference key="1">
    <citation type="journal article" date="2004" name="J. Mol. Microbiol. Biotechnol.">
        <title>The complete genome sequence of Bacillus licheniformis DSM13, an organism with great industrial potential.</title>
        <authorList>
            <person name="Veith B."/>
            <person name="Herzberg C."/>
            <person name="Steckel S."/>
            <person name="Feesche J."/>
            <person name="Maurer K.H."/>
            <person name="Ehrenreich P."/>
            <person name="Baeumer S."/>
            <person name="Henne A."/>
            <person name="Liesegang H."/>
            <person name="Merkl R."/>
            <person name="Ehrenreich A."/>
            <person name="Gottschalk G."/>
        </authorList>
    </citation>
    <scope>NUCLEOTIDE SEQUENCE [LARGE SCALE GENOMIC DNA]</scope>
    <source>
        <strain>ATCC 14580 / DSM 13 / JCM 2505 / CCUG 7422 / NBRC 12200 / NCIMB 9375 / NCTC 10341 / NRRL NRS-1264 / Gibson 46</strain>
    </source>
</reference>
<reference key="2">
    <citation type="journal article" date="2004" name="Genome Biol.">
        <title>Complete genome sequence of the industrial bacterium Bacillus licheniformis and comparisons with closely related Bacillus species.</title>
        <authorList>
            <person name="Rey M.W."/>
            <person name="Ramaiya P."/>
            <person name="Nelson B.A."/>
            <person name="Brody-Karpin S.D."/>
            <person name="Zaretsky E.J."/>
            <person name="Tang M."/>
            <person name="Lopez de Leon A."/>
            <person name="Xiang H."/>
            <person name="Gusti V."/>
            <person name="Clausen I.G."/>
            <person name="Olsen P.B."/>
            <person name="Rasmussen M.D."/>
            <person name="Andersen J.T."/>
            <person name="Joergensen P.L."/>
            <person name="Larsen T.S."/>
            <person name="Sorokin A."/>
            <person name="Bolotin A."/>
            <person name="Lapidus A."/>
            <person name="Galleron N."/>
            <person name="Ehrlich S.D."/>
            <person name="Berka R.M."/>
        </authorList>
    </citation>
    <scope>NUCLEOTIDE SEQUENCE [LARGE SCALE GENOMIC DNA]</scope>
    <source>
        <strain>ATCC 14580 / DSM 13 / JCM 2505 / CCUG 7422 / NBRC 12200 / NCIMB 9375 / NCTC 10341 / NRRL NRS-1264 / Gibson 46</strain>
    </source>
</reference>
<reference key="3">
    <citation type="submission" date="2007-04" db="EMBL/GenBank/DDBJ databases">
        <authorList>
            <person name="Berka R.M."/>
            <person name="Rey M.W."/>
            <person name="Ramaiya P."/>
        </authorList>
    </citation>
    <scope>SEQUENCE REVISION TO 117</scope>
</reference>
<organism>
    <name type="scientific">Bacillus licheniformis (strain ATCC 14580 / DSM 13 / JCM 2505 / CCUG 7422 / NBRC 12200 / NCIMB 9375 / NCTC 10341 / NRRL NRS-1264 / Gibson 46)</name>
    <dbReference type="NCBI Taxonomy" id="279010"/>
    <lineage>
        <taxon>Bacteria</taxon>
        <taxon>Bacillati</taxon>
        <taxon>Bacillota</taxon>
        <taxon>Bacilli</taxon>
        <taxon>Bacillales</taxon>
        <taxon>Bacillaceae</taxon>
        <taxon>Bacillus</taxon>
    </lineage>
</organism>
<proteinExistence type="inferred from homology"/>
<sequence>MARIAGVDIPRDKRVVISLTYIFGIGRTTAQQILKEAGVSEDTRVRDLTEEELGKIRDVIDKLKVEGDLRREVSLNIKRLIEIGSYRGIRHRRGLPVRGQNTKNNARTRKGPRRTVANKKK</sequence>
<comment type="function">
    <text evidence="1">Located at the top of the head of the 30S subunit, it contacts several helices of the 16S rRNA. In the 70S ribosome it contacts the 23S rRNA (bridge B1a) and protein L5 of the 50S subunit (bridge B1b), connecting the 2 subunits; these bridges are implicated in subunit movement. Contacts the tRNAs in the A and P-sites.</text>
</comment>
<comment type="subunit">
    <text evidence="1">Part of the 30S ribosomal subunit. Forms a loose heterodimer with protein S19. Forms two bridges to the 50S subunit in the 70S ribosome.</text>
</comment>
<comment type="similarity">
    <text evidence="1">Belongs to the universal ribosomal protein uS13 family.</text>
</comment>
<protein>
    <recommendedName>
        <fullName evidence="1">Small ribosomal subunit protein uS13</fullName>
    </recommendedName>
    <alternativeName>
        <fullName evidence="3">30S ribosomal protein S13</fullName>
    </alternativeName>
</protein>
<feature type="chain" id="PRO_0000230469" description="Small ribosomal subunit protein uS13">
    <location>
        <begin position="1"/>
        <end position="121"/>
    </location>
</feature>
<feature type="region of interest" description="Disordered" evidence="2">
    <location>
        <begin position="93"/>
        <end position="121"/>
    </location>
</feature>
<feature type="compositionally biased region" description="Basic residues" evidence="2">
    <location>
        <begin position="106"/>
        <end position="121"/>
    </location>
</feature>
<evidence type="ECO:0000255" key="1">
    <source>
        <dbReference type="HAMAP-Rule" id="MF_01315"/>
    </source>
</evidence>
<evidence type="ECO:0000256" key="2">
    <source>
        <dbReference type="SAM" id="MobiDB-lite"/>
    </source>
</evidence>
<evidence type="ECO:0000305" key="3"/>
<dbReference type="EMBL" id="AE017333">
    <property type="protein sequence ID" value="AAU39133.1"/>
    <property type="molecule type" value="Genomic_DNA"/>
</dbReference>
<dbReference type="EMBL" id="CP000002">
    <property type="protein sequence ID" value="AAU21788.2"/>
    <property type="molecule type" value="Genomic_DNA"/>
</dbReference>
<dbReference type="RefSeq" id="WP_003178378.1">
    <property type="nucleotide sequence ID" value="NC_006322.1"/>
</dbReference>
<dbReference type="SMR" id="Q65P81"/>
<dbReference type="STRING" id="279010.BL01026"/>
<dbReference type="GeneID" id="92858877"/>
<dbReference type="KEGG" id="bld:BLi00159"/>
<dbReference type="KEGG" id="bli:BL01026"/>
<dbReference type="eggNOG" id="COG0099">
    <property type="taxonomic scope" value="Bacteria"/>
</dbReference>
<dbReference type="HOGENOM" id="CLU_103849_1_1_9"/>
<dbReference type="Proteomes" id="UP000000606">
    <property type="component" value="Chromosome"/>
</dbReference>
<dbReference type="GO" id="GO:0005829">
    <property type="term" value="C:cytosol"/>
    <property type="evidence" value="ECO:0007669"/>
    <property type="project" value="TreeGrafter"/>
</dbReference>
<dbReference type="GO" id="GO:0015935">
    <property type="term" value="C:small ribosomal subunit"/>
    <property type="evidence" value="ECO:0007669"/>
    <property type="project" value="TreeGrafter"/>
</dbReference>
<dbReference type="GO" id="GO:0019843">
    <property type="term" value="F:rRNA binding"/>
    <property type="evidence" value="ECO:0007669"/>
    <property type="project" value="UniProtKB-UniRule"/>
</dbReference>
<dbReference type="GO" id="GO:0003735">
    <property type="term" value="F:structural constituent of ribosome"/>
    <property type="evidence" value="ECO:0007669"/>
    <property type="project" value="InterPro"/>
</dbReference>
<dbReference type="GO" id="GO:0000049">
    <property type="term" value="F:tRNA binding"/>
    <property type="evidence" value="ECO:0007669"/>
    <property type="project" value="UniProtKB-UniRule"/>
</dbReference>
<dbReference type="GO" id="GO:0006412">
    <property type="term" value="P:translation"/>
    <property type="evidence" value="ECO:0007669"/>
    <property type="project" value="UniProtKB-UniRule"/>
</dbReference>
<dbReference type="FunFam" id="1.10.8.50:FF:000001">
    <property type="entry name" value="30S ribosomal protein S13"/>
    <property type="match status" value="1"/>
</dbReference>
<dbReference type="FunFam" id="4.10.910.10:FF:000001">
    <property type="entry name" value="30S ribosomal protein S13"/>
    <property type="match status" value="1"/>
</dbReference>
<dbReference type="Gene3D" id="1.10.8.50">
    <property type="match status" value="1"/>
</dbReference>
<dbReference type="Gene3D" id="4.10.910.10">
    <property type="entry name" value="30s ribosomal protein s13, domain 2"/>
    <property type="match status" value="1"/>
</dbReference>
<dbReference type="HAMAP" id="MF_01315">
    <property type="entry name" value="Ribosomal_uS13"/>
    <property type="match status" value="1"/>
</dbReference>
<dbReference type="InterPro" id="IPR027437">
    <property type="entry name" value="Rbsml_uS13_C"/>
</dbReference>
<dbReference type="InterPro" id="IPR001892">
    <property type="entry name" value="Ribosomal_uS13"/>
</dbReference>
<dbReference type="InterPro" id="IPR010979">
    <property type="entry name" value="Ribosomal_uS13-like_H2TH"/>
</dbReference>
<dbReference type="InterPro" id="IPR019980">
    <property type="entry name" value="Ribosomal_uS13_bac-type"/>
</dbReference>
<dbReference type="InterPro" id="IPR018269">
    <property type="entry name" value="Ribosomal_uS13_CS"/>
</dbReference>
<dbReference type="NCBIfam" id="TIGR03631">
    <property type="entry name" value="uS13_bact"/>
    <property type="match status" value="1"/>
</dbReference>
<dbReference type="PANTHER" id="PTHR10871">
    <property type="entry name" value="30S RIBOSOMAL PROTEIN S13/40S RIBOSOMAL PROTEIN S18"/>
    <property type="match status" value="1"/>
</dbReference>
<dbReference type="PANTHER" id="PTHR10871:SF1">
    <property type="entry name" value="SMALL RIBOSOMAL SUBUNIT PROTEIN US13M"/>
    <property type="match status" value="1"/>
</dbReference>
<dbReference type="Pfam" id="PF00416">
    <property type="entry name" value="Ribosomal_S13"/>
    <property type="match status" value="1"/>
</dbReference>
<dbReference type="PIRSF" id="PIRSF002134">
    <property type="entry name" value="Ribosomal_S13"/>
    <property type="match status" value="1"/>
</dbReference>
<dbReference type="SUPFAM" id="SSF46946">
    <property type="entry name" value="S13-like H2TH domain"/>
    <property type="match status" value="1"/>
</dbReference>
<dbReference type="PROSITE" id="PS00646">
    <property type="entry name" value="RIBOSOMAL_S13_1"/>
    <property type="match status" value="1"/>
</dbReference>
<dbReference type="PROSITE" id="PS50159">
    <property type="entry name" value="RIBOSOMAL_S13_2"/>
    <property type="match status" value="1"/>
</dbReference>
<keyword id="KW-1185">Reference proteome</keyword>
<keyword id="KW-0687">Ribonucleoprotein</keyword>
<keyword id="KW-0689">Ribosomal protein</keyword>
<keyword id="KW-0694">RNA-binding</keyword>
<keyword id="KW-0699">rRNA-binding</keyword>
<keyword id="KW-0820">tRNA-binding</keyword>
<name>RS13_BACLD</name>
<gene>
    <name evidence="1" type="primary">rpsM</name>
    <name type="ordered locus">BLi00159</name>
    <name type="ordered locus">BL01026</name>
</gene>
<accession>Q65P81</accession>
<accession>Q62ZM0</accession>